<proteinExistence type="inferred from homology"/>
<reference key="1">
    <citation type="journal article" date="2002" name="Proc. Natl. Acad. Sci. U.S.A.">
        <title>Genome sequence of a serotype M3 strain of group A Streptococcus: phage-encoded toxins, the high-virulence phenotype, and clone emergence.</title>
        <authorList>
            <person name="Beres S.B."/>
            <person name="Sylva G.L."/>
            <person name="Barbian K.D."/>
            <person name="Lei B."/>
            <person name="Hoff J.S."/>
            <person name="Mammarella N.D."/>
            <person name="Liu M.-Y."/>
            <person name="Smoot J.C."/>
            <person name="Porcella S.F."/>
            <person name="Parkins L.D."/>
            <person name="Campbell D.S."/>
            <person name="Smith T.M."/>
            <person name="McCormick J.K."/>
            <person name="Leung D.Y.M."/>
            <person name="Schlievert P.M."/>
            <person name="Musser J.M."/>
        </authorList>
    </citation>
    <scope>NUCLEOTIDE SEQUENCE [LARGE SCALE GENOMIC DNA]</scope>
    <source>
        <strain>ATCC BAA-595 / MGAS315</strain>
    </source>
</reference>
<organism>
    <name type="scientific">Streptococcus pyogenes serotype M3 (strain ATCC BAA-595 / MGAS315)</name>
    <dbReference type="NCBI Taxonomy" id="198466"/>
    <lineage>
        <taxon>Bacteria</taxon>
        <taxon>Bacillati</taxon>
        <taxon>Bacillota</taxon>
        <taxon>Bacilli</taxon>
        <taxon>Lactobacillales</taxon>
        <taxon>Streptococcaceae</taxon>
        <taxon>Streptococcus</taxon>
    </lineage>
</organism>
<name>NRDIL_STRP3</name>
<gene>
    <name type="ordered locus">SpyM3_1706</name>
</gene>
<comment type="similarity">
    <text evidence="1">Belongs to the NrdI family.</text>
</comment>
<dbReference type="EMBL" id="AE014074">
    <property type="protein sequence ID" value="AAM80313.1"/>
    <property type="molecule type" value="Genomic_DNA"/>
</dbReference>
<dbReference type="SMR" id="P0DC72"/>
<dbReference type="KEGG" id="spg:SpyM3_1706"/>
<dbReference type="HOGENOM" id="CLU_114845_1_0_9"/>
<dbReference type="Proteomes" id="UP000000564">
    <property type="component" value="Chromosome"/>
</dbReference>
<dbReference type="GO" id="GO:0010181">
    <property type="term" value="F:FMN binding"/>
    <property type="evidence" value="ECO:0007669"/>
    <property type="project" value="InterPro"/>
</dbReference>
<dbReference type="GO" id="GO:0036211">
    <property type="term" value="P:protein modification process"/>
    <property type="evidence" value="ECO:0007669"/>
    <property type="project" value="InterPro"/>
</dbReference>
<dbReference type="Gene3D" id="3.40.50.360">
    <property type="match status" value="1"/>
</dbReference>
<dbReference type="InterPro" id="IPR029039">
    <property type="entry name" value="Flavoprotein-like_sf"/>
</dbReference>
<dbReference type="InterPro" id="IPR004465">
    <property type="entry name" value="RNR_NrdI"/>
</dbReference>
<dbReference type="NCBIfam" id="NF002714">
    <property type="entry name" value="PRK02551.1"/>
    <property type="match status" value="1"/>
</dbReference>
<dbReference type="PANTHER" id="PTHR37297">
    <property type="entry name" value="PROTEIN NRDI"/>
    <property type="match status" value="1"/>
</dbReference>
<dbReference type="PANTHER" id="PTHR37297:SF1">
    <property type="entry name" value="PROTEIN NRDI"/>
    <property type="match status" value="1"/>
</dbReference>
<dbReference type="Pfam" id="PF07972">
    <property type="entry name" value="Flavodoxin_NdrI"/>
    <property type="match status" value="1"/>
</dbReference>
<dbReference type="PIRSF" id="PIRSF005087">
    <property type="entry name" value="NrdI"/>
    <property type="match status" value="1"/>
</dbReference>
<dbReference type="SUPFAM" id="SSF52218">
    <property type="entry name" value="Flavoproteins"/>
    <property type="match status" value="1"/>
</dbReference>
<sequence>MPQITLVFISLSGNTLSFVKRLSLYLADNYDYHVKQINIKDLKHETFPVKEEFVAILPTYLEGGNGVDSGEAEILTTPLGEFIAAHGNAQRCLGIIGSGNKNFNHQYCLTAKQYAKRFGFPLLGDFELRGTPDDISRLAQVIMEASSRHSSNDTQTLPNS</sequence>
<protein>
    <recommendedName>
        <fullName>Putative NrdI-like protein</fullName>
    </recommendedName>
</protein>
<evidence type="ECO:0000305" key="1"/>
<accession>P0DC72</accession>
<accession>Q8K5R3</accession>
<feature type="chain" id="PRO_0000164353" description="Putative NrdI-like protein">
    <location>
        <begin position="1"/>
        <end position="160"/>
    </location>
</feature>